<reference key="1">
    <citation type="journal article" date="2007" name="PLoS Genet.">
        <title>Meningococcal genetic variation mechanisms viewed through comparative analysis of serogroup C strain FAM18.</title>
        <authorList>
            <person name="Bentley S.D."/>
            <person name="Vernikos G.S."/>
            <person name="Snyder L.A.S."/>
            <person name="Churcher C."/>
            <person name="Arrowsmith C."/>
            <person name="Chillingworth T."/>
            <person name="Cronin A."/>
            <person name="Davis P.H."/>
            <person name="Holroyd N.E."/>
            <person name="Jagels K."/>
            <person name="Maddison M."/>
            <person name="Moule S."/>
            <person name="Rabbinowitsch E."/>
            <person name="Sharp S."/>
            <person name="Unwin L."/>
            <person name="Whitehead S."/>
            <person name="Quail M.A."/>
            <person name="Achtman M."/>
            <person name="Barrell B.G."/>
            <person name="Saunders N.J."/>
            <person name="Parkhill J."/>
        </authorList>
    </citation>
    <scope>NUCLEOTIDE SEQUENCE [LARGE SCALE GENOMIC DNA]</scope>
    <source>
        <strain>ATCC 700532 / DSM 15464 / FAM18</strain>
    </source>
</reference>
<keyword id="KW-0067">ATP-binding</keyword>
<keyword id="KW-0963">Cytoplasm</keyword>
<keyword id="KW-0324">Glycolysis</keyword>
<keyword id="KW-0418">Kinase</keyword>
<keyword id="KW-0547">Nucleotide-binding</keyword>
<keyword id="KW-0808">Transferase</keyword>
<evidence type="ECO:0000255" key="1">
    <source>
        <dbReference type="HAMAP-Rule" id="MF_00145"/>
    </source>
</evidence>
<dbReference type="EC" id="2.7.2.3" evidence="1"/>
<dbReference type="EMBL" id="AM421808">
    <property type="protein sequence ID" value="CAM11296.1"/>
    <property type="molecule type" value="Genomic_DNA"/>
</dbReference>
<dbReference type="RefSeq" id="WP_002221761.1">
    <property type="nucleotide sequence ID" value="NC_008767.1"/>
</dbReference>
<dbReference type="SMR" id="A1KWN6"/>
<dbReference type="KEGG" id="nmc:NMC2148"/>
<dbReference type="HOGENOM" id="CLU_025427_0_2_4"/>
<dbReference type="UniPathway" id="UPA00109">
    <property type="reaction ID" value="UER00185"/>
</dbReference>
<dbReference type="Proteomes" id="UP000002286">
    <property type="component" value="Chromosome"/>
</dbReference>
<dbReference type="GO" id="GO:0005829">
    <property type="term" value="C:cytosol"/>
    <property type="evidence" value="ECO:0007669"/>
    <property type="project" value="TreeGrafter"/>
</dbReference>
<dbReference type="GO" id="GO:0043531">
    <property type="term" value="F:ADP binding"/>
    <property type="evidence" value="ECO:0007669"/>
    <property type="project" value="TreeGrafter"/>
</dbReference>
<dbReference type="GO" id="GO:0005524">
    <property type="term" value="F:ATP binding"/>
    <property type="evidence" value="ECO:0007669"/>
    <property type="project" value="UniProtKB-KW"/>
</dbReference>
<dbReference type="GO" id="GO:0004618">
    <property type="term" value="F:phosphoglycerate kinase activity"/>
    <property type="evidence" value="ECO:0007669"/>
    <property type="project" value="UniProtKB-UniRule"/>
</dbReference>
<dbReference type="GO" id="GO:0006094">
    <property type="term" value="P:gluconeogenesis"/>
    <property type="evidence" value="ECO:0007669"/>
    <property type="project" value="TreeGrafter"/>
</dbReference>
<dbReference type="GO" id="GO:0006096">
    <property type="term" value="P:glycolytic process"/>
    <property type="evidence" value="ECO:0007669"/>
    <property type="project" value="UniProtKB-UniRule"/>
</dbReference>
<dbReference type="FunFam" id="3.40.50.1260:FF:000001">
    <property type="entry name" value="Phosphoglycerate kinase"/>
    <property type="match status" value="1"/>
</dbReference>
<dbReference type="FunFam" id="3.40.50.1260:FF:000002">
    <property type="entry name" value="Phosphoglycerate kinase"/>
    <property type="match status" value="1"/>
</dbReference>
<dbReference type="Gene3D" id="3.40.50.1260">
    <property type="entry name" value="Phosphoglycerate kinase, N-terminal domain"/>
    <property type="match status" value="2"/>
</dbReference>
<dbReference type="HAMAP" id="MF_00145">
    <property type="entry name" value="Phosphoglyc_kinase"/>
    <property type="match status" value="1"/>
</dbReference>
<dbReference type="InterPro" id="IPR001576">
    <property type="entry name" value="Phosphoglycerate_kinase"/>
</dbReference>
<dbReference type="InterPro" id="IPR015911">
    <property type="entry name" value="Phosphoglycerate_kinase_CS"/>
</dbReference>
<dbReference type="InterPro" id="IPR015824">
    <property type="entry name" value="Phosphoglycerate_kinase_N"/>
</dbReference>
<dbReference type="InterPro" id="IPR036043">
    <property type="entry name" value="Phosphoglycerate_kinase_sf"/>
</dbReference>
<dbReference type="PANTHER" id="PTHR11406">
    <property type="entry name" value="PHOSPHOGLYCERATE KINASE"/>
    <property type="match status" value="1"/>
</dbReference>
<dbReference type="PANTHER" id="PTHR11406:SF23">
    <property type="entry name" value="PHOSPHOGLYCERATE KINASE 1, CHLOROPLASTIC-RELATED"/>
    <property type="match status" value="1"/>
</dbReference>
<dbReference type="Pfam" id="PF00162">
    <property type="entry name" value="PGK"/>
    <property type="match status" value="1"/>
</dbReference>
<dbReference type="PIRSF" id="PIRSF000724">
    <property type="entry name" value="Pgk"/>
    <property type="match status" value="1"/>
</dbReference>
<dbReference type="PRINTS" id="PR00477">
    <property type="entry name" value="PHGLYCKINASE"/>
</dbReference>
<dbReference type="SUPFAM" id="SSF53748">
    <property type="entry name" value="Phosphoglycerate kinase"/>
    <property type="match status" value="1"/>
</dbReference>
<dbReference type="PROSITE" id="PS00111">
    <property type="entry name" value="PGLYCERATE_KINASE"/>
    <property type="match status" value="1"/>
</dbReference>
<comment type="catalytic activity">
    <reaction evidence="1">
        <text>(2R)-3-phosphoglycerate + ATP = (2R)-3-phospho-glyceroyl phosphate + ADP</text>
        <dbReference type="Rhea" id="RHEA:14801"/>
        <dbReference type="ChEBI" id="CHEBI:30616"/>
        <dbReference type="ChEBI" id="CHEBI:57604"/>
        <dbReference type="ChEBI" id="CHEBI:58272"/>
        <dbReference type="ChEBI" id="CHEBI:456216"/>
        <dbReference type="EC" id="2.7.2.3"/>
    </reaction>
</comment>
<comment type="pathway">
    <text evidence="1">Carbohydrate degradation; glycolysis; pyruvate from D-glyceraldehyde 3-phosphate: step 2/5.</text>
</comment>
<comment type="subunit">
    <text evidence="1">Monomer.</text>
</comment>
<comment type="subcellular location">
    <subcellularLocation>
        <location evidence="1">Cytoplasm</location>
    </subcellularLocation>
</comment>
<comment type="similarity">
    <text evidence="1">Belongs to the phosphoglycerate kinase family.</text>
</comment>
<sequence length="392" mass="40693">MAFLKLTEQNVQGKTVLIRADMNVPFKDGKISDDTRIRASLASIQYCMDNGASVIVMTHLGRPTEGEFHPEDDVAPVAAHLGGLLGKNVKVLNDWRENKPALNAGDVVMLQNVRINKGEKKNDLELGKAYASLCDVFVNDAFGTAHRAQASTEAVAQAAPVACAGVLMAGELDALGKALKQPARPMVAIVAGSKVSTKLTILESLADKVDQLIVGGGIANTFLLAEGKAIGKSLAEHDLVEESKKIMAKMAAKGGSVPLPTDVVVAKAFTADAEAVVKDIADVAEDDMILDIGPKSAAELADLLKAAGTVVWNGPVGVFEFDQFAGGTKALAEAIAQSKAFSIAGGGDTLAAIAKFGVTDQIGYISTGGGAFLEFLEGKELPAVAALEKRGA</sequence>
<gene>
    <name evidence="1" type="primary">pgk</name>
    <name type="ordered locus">NMC2148</name>
</gene>
<accession>A1KWN6</accession>
<organism>
    <name type="scientific">Neisseria meningitidis serogroup C / serotype 2a (strain ATCC 700532 / DSM 15464 / FAM18)</name>
    <dbReference type="NCBI Taxonomy" id="272831"/>
    <lineage>
        <taxon>Bacteria</taxon>
        <taxon>Pseudomonadati</taxon>
        <taxon>Pseudomonadota</taxon>
        <taxon>Betaproteobacteria</taxon>
        <taxon>Neisseriales</taxon>
        <taxon>Neisseriaceae</taxon>
        <taxon>Neisseria</taxon>
    </lineage>
</organism>
<proteinExistence type="inferred from homology"/>
<protein>
    <recommendedName>
        <fullName evidence="1">Phosphoglycerate kinase</fullName>
        <ecNumber evidence="1">2.7.2.3</ecNumber>
    </recommendedName>
</protein>
<feature type="chain" id="PRO_1000058019" description="Phosphoglycerate kinase">
    <location>
        <begin position="1"/>
        <end position="392"/>
    </location>
</feature>
<feature type="binding site" evidence="1">
    <location>
        <begin position="21"/>
        <end position="23"/>
    </location>
    <ligand>
        <name>substrate</name>
    </ligand>
</feature>
<feature type="binding site" evidence="1">
    <location>
        <position position="36"/>
    </location>
    <ligand>
        <name>substrate</name>
    </ligand>
</feature>
<feature type="binding site" evidence="1">
    <location>
        <begin position="59"/>
        <end position="62"/>
    </location>
    <ligand>
        <name>substrate</name>
    </ligand>
</feature>
<feature type="binding site" evidence="1">
    <location>
        <position position="114"/>
    </location>
    <ligand>
        <name>substrate</name>
    </ligand>
</feature>
<feature type="binding site" evidence="1">
    <location>
        <position position="147"/>
    </location>
    <ligand>
        <name>substrate</name>
    </ligand>
</feature>
<feature type="binding site" evidence="1">
    <location>
        <position position="198"/>
    </location>
    <ligand>
        <name>ATP</name>
        <dbReference type="ChEBI" id="CHEBI:30616"/>
    </ligand>
</feature>
<feature type="binding site" evidence="1">
    <location>
        <position position="320"/>
    </location>
    <ligand>
        <name>ATP</name>
        <dbReference type="ChEBI" id="CHEBI:30616"/>
    </ligand>
</feature>
<feature type="binding site" evidence="1">
    <location>
        <begin position="346"/>
        <end position="349"/>
    </location>
    <ligand>
        <name>ATP</name>
        <dbReference type="ChEBI" id="CHEBI:30616"/>
    </ligand>
</feature>
<name>PGK_NEIMF</name>